<name>KGX16_CENEX</name>
<feature type="chain" id="PRO_0000066860" description="Potassium channel toxin gamma-KTx 1.6">
    <location>
        <begin position="1"/>
        <end position="42"/>
    </location>
</feature>
<feature type="disulfide bond" evidence="2">
    <location>
        <begin position="5"/>
        <end position="23"/>
    </location>
</feature>
<feature type="disulfide bond" evidence="2">
    <location>
        <begin position="11"/>
        <end position="34"/>
    </location>
</feature>
<feature type="disulfide bond" evidence="2">
    <location>
        <begin position="20"/>
        <end position="39"/>
    </location>
</feature>
<feature type="disulfide bond" evidence="2">
    <location>
        <begin position="24"/>
        <end position="41"/>
    </location>
</feature>
<keyword id="KW-1015">Disulfide bond</keyword>
<keyword id="KW-0872">Ion channel impairing toxin</keyword>
<keyword id="KW-0960">Knottin</keyword>
<keyword id="KW-0528">Neurotoxin</keyword>
<keyword id="KW-0632">Potassium channel impairing toxin</keyword>
<keyword id="KW-0964">Secreted</keyword>
<keyword id="KW-0800">Toxin</keyword>
<keyword id="KW-1220">Voltage-gated potassium channel impairing toxin</keyword>
<organism>
    <name type="scientific">Centruroides exilicauda</name>
    <name type="common">Bark scorpion</name>
    <name type="synonym">Buthus exilicauda</name>
    <dbReference type="NCBI Taxonomy" id="6879"/>
    <lineage>
        <taxon>Eukaryota</taxon>
        <taxon>Metazoa</taxon>
        <taxon>Ecdysozoa</taxon>
        <taxon>Arthropoda</taxon>
        <taxon>Chelicerata</taxon>
        <taxon>Arachnida</taxon>
        <taxon>Scorpiones</taxon>
        <taxon>Buthida</taxon>
        <taxon>Buthoidea</taxon>
        <taxon>Buthidae</taxon>
        <taxon>Centruroides</taxon>
    </lineage>
</organism>
<reference key="1">
    <citation type="journal article" date="2002" name="FEBS Lett.">
        <title>A large number of novel Ergtoxin-like genes and ERG K+-channels blocking peptides from scorpions of the genus Centruroides.</title>
        <authorList>
            <person name="Corona M."/>
            <person name="Gurrola G.B."/>
            <person name="Merino E."/>
            <person name="Cassulini R.R."/>
            <person name="Valdez-Cruz N.A."/>
            <person name="Garcia B."/>
            <person name="Ramirez-Dominguez M.E."/>
            <person name="Coronas F.I."/>
            <person name="Zamudio F.Z."/>
            <person name="Wanke E."/>
            <person name="Possani L.D."/>
        </authorList>
    </citation>
    <scope>NUCLEOTIDE SEQUENCE [MRNA]</scope>
    <scope>NOMENCLATURE</scope>
    <source>
        <tissue>Venom gland</tissue>
    </source>
</reference>
<evidence type="ECO:0000250" key="1"/>
<evidence type="ECO:0000250" key="2">
    <source>
        <dbReference type="UniProtKB" id="Q86QT3"/>
    </source>
</evidence>
<evidence type="ECO:0000303" key="3">
    <source>
    </source>
</evidence>
<evidence type="ECO:0000305" key="4"/>
<proteinExistence type="evidence at transcript level"/>
<protein>
    <recommendedName>
        <fullName evidence="3">Potassium channel toxin gamma-KTx 1.6</fullName>
    </recommendedName>
    <alternativeName>
        <fullName evidence="4">CexErgTx1</fullName>
        <shortName evidence="3">CexErg1</shortName>
    </alternativeName>
    <alternativeName>
        <fullName evidence="3">Ergtoxin-like protein</fullName>
    </alternativeName>
</protein>
<comment type="function">
    <text evidence="2">Blocks Kv11/ERG potassium channels.</text>
</comment>
<comment type="subcellular location">
    <subcellularLocation>
        <location evidence="2">Secreted</location>
    </subcellularLocation>
</comment>
<comment type="tissue specificity">
    <text>Expressed by the venom gland.</text>
</comment>
<comment type="domain">
    <text evidence="1">The presence of a 'disulfide through disulfide knot' structurally defines this protein as a knottin.</text>
</comment>
<comment type="domain">
    <text evidence="2">Has the CSalpha/beta fold, which comprises one or two short alpha helices connected to anti-parallel beta-sheets stabilized by three or four disulfide bonds.</text>
</comment>
<comment type="similarity">
    <text evidence="4">Belongs to the ergtoxin family. Gamma-KTx 1 subfamily.</text>
</comment>
<sequence length="42" mass="4725">DRDSCVDKSRCAKYGYYQECQDCCKKAGHSGGTCMFFKCKCA</sequence>
<dbReference type="EMBL" id="AY159352">
    <property type="protein sequence ID" value="AAO22230.1"/>
    <property type="molecule type" value="mRNA"/>
</dbReference>
<dbReference type="SMR" id="Q86QU1"/>
<dbReference type="GO" id="GO:0005576">
    <property type="term" value="C:extracellular region"/>
    <property type="evidence" value="ECO:0007669"/>
    <property type="project" value="UniProtKB-SubCell"/>
</dbReference>
<dbReference type="GO" id="GO:0019870">
    <property type="term" value="F:potassium channel inhibitor activity"/>
    <property type="evidence" value="ECO:0007669"/>
    <property type="project" value="InterPro"/>
</dbReference>
<dbReference type="GO" id="GO:0090729">
    <property type="term" value="F:toxin activity"/>
    <property type="evidence" value="ECO:0007669"/>
    <property type="project" value="UniProtKB-KW"/>
</dbReference>
<dbReference type="Gene3D" id="3.30.30.10">
    <property type="entry name" value="Knottin, scorpion toxin-like"/>
    <property type="match status" value="1"/>
</dbReference>
<dbReference type="InterPro" id="IPR012622">
    <property type="entry name" value="Ergtoxin"/>
</dbReference>
<dbReference type="InterPro" id="IPR036574">
    <property type="entry name" value="Scorpion_toxin-like_sf"/>
</dbReference>
<dbReference type="Pfam" id="PF08086">
    <property type="entry name" value="Toxin_17"/>
    <property type="match status" value="1"/>
</dbReference>
<dbReference type="SUPFAM" id="SSF57095">
    <property type="entry name" value="Scorpion toxin-like"/>
    <property type="match status" value="1"/>
</dbReference>
<dbReference type="PROSITE" id="PS60026">
    <property type="entry name" value="ERGTX"/>
    <property type="match status" value="1"/>
</dbReference>
<accession>Q86QU1</accession>